<sequence length="577" mass="64487">MALNGPGVYHRTREHEQKDASDITKNILAESWKSWPNEAAFDRLEEHRGPLRLTLKGTIPSWAGGSLYRTGPGQSRVEDTARGTHFTTHWFDGFAQTHRFDIIPSEDGETQVWYSSRRQADEWIADVKKKGWRSGMTFGQKADPCVGIFAKVMTLFEPKLGNHNVALLANVPGVPKDEKTEVLNGVTGPLGHRVNTSNLFVSTDYTGIRRIDPSTLQPLAETTQYDLHPSLSGPCSCSHAQRDPDSGDLFNFNLAFGRVPTYRIFRVDAASGETEVLATISDLNVPPAYMHSFFLTENHVVICIPASHYAWRGLKTQWEGNIIDSMKPFDKERKCKWLVVDRRHGKGLVATFSTPAAFFFHSINAFEKNIEDEDGTEQTDLFFDLAKYNNMDIIKGFYYDVLMDRDDATKKYWFKNDRYKNCAPTLTRYRFRLPSAPTPDTTFSASAEQVLAIPSPHAGELPTIHPLRNGKPYRYVYSASLRGLTTSVDALVKTDLDTSEAFIWTGPEGHTPGEPVFVPRPGAEAEDDGIVFSLVVDGVNEKAYILCLNGKTMEELGRAEADFAIGQGFHGIHLPAA</sequence>
<reference key="1">
    <citation type="journal article" date="2007" name="Mol. Microbiol.">
        <title>Identification and biochemical characterization of a novel carotenoid oxygenase: elucidation of the cleavage step in the Fusarium carotenoid pathway.</title>
        <authorList>
            <person name="Prado-Cabrero A."/>
            <person name="Estrada A.F."/>
            <person name="Al-Babili S."/>
            <person name="Avalos J."/>
        </authorList>
    </citation>
    <scope>NUCLEOTIDE SEQUENCE [GENOMIC DNA]</scope>
    <scope>FUNCTION</scope>
    <scope>CATALYTIC ACTIVITY</scope>
    <scope>INDUCTION</scope>
    <source>
        <strain>FKMC1995</strain>
    </source>
</reference>
<reference key="2">
    <citation type="submission" date="2016-09" db="EMBL/GenBank/DDBJ databases">
        <authorList>
            <person name="Guldener U."/>
        </authorList>
    </citation>
    <scope>NUCLEOTIDE SEQUENCE [LARGE SCALE GENOMIC DNA]</scope>
    <source>
        <strain>C1995</strain>
    </source>
</reference>
<evidence type="ECO:0000250" key="1">
    <source>
        <dbReference type="UniProtKB" id="Q7S860"/>
    </source>
</evidence>
<evidence type="ECO:0000250" key="2">
    <source>
        <dbReference type="UniProtKB" id="Q9I993"/>
    </source>
</evidence>
<evidence type="ECO:0000250" key="3">
    <source>
        <dbReference type="UniProtKB" id="Q9JJS6"/>
    </source>
</evidence>
<evidence type="ECO:0000269" key="4">
    <source>
    </source>
</evidence>
<evidence type="ECO:0000303" key="5">
    <source>
    </source>
</evidence>
<evidence type="ECO:0000305" key="6"/>
<evidence type="ECO:0000305" key="7">
    <source>
    </source>
</evidence>
<comment type="function">
    <text evidence="4 7">Torulene dioxygenase; part of the pathway that mediates the biosynthesis of neurosporaxanthin, a carboxylic apocarotenoid acting as an essential protective pigments and leading to orange pigmentation (PubMed:17493127). CarT mediates the cleavage of torulene into beta-apo-4'-carotenal, the aldehyde corresponding to the acidic neurosporaxanthin (PubMed:17493127). Is also active on other monocyclic synthetic substrates such as beta-apo-8'-carotenal and beta-apo-10'-carotenal to produce beta-apo-14'-carotenal and retinal(beta-apo-15'-carotenal), respectively (PubMed:17493127). Neurosporaxanthin is synthesized from geranyl-geranyl pyrophosphate (GGPP) through several enzymatic activities. Phytoene synthase activity performed by the bifunctional enzyme carAR first produces phytoene from geranyl-geranyl pyrophosphate (GGPP). The phytoene dehydrogenase carB then introduces 4 desaturations to lead to lycopene which is substrate of the carotene cyclase activity of carAR that leads to the production of gamma-carotene. CarB then performs a 5th desaturation reaction to yield torulene. Torulene is the substrate of the dioxidase carT that breaks the molecule, removing five carbon atoms to yield beta-apo-4'-carotenal, whereas the aldehyde dehydrogenase carD mediates the last step by converting beta-apo-4'-carotenal into neurosporaxanthin (Probable).</text>
</comment>
<comment type="catalytic activity">
    <reaction evidence="4">
        <text>torulene + O2 = 4'-apo-beta-carotenal + 3-methyl-2-butenal</text>
        <dbReference type="Rhea" id="RHEA:31519"/>
        <dbReference type="ChEBI" id="CHEBI:9638"/>
        <dbReference type="ChEBI" id="CHEBI:15379"/>
        <dbReference type="ChEBI" id="CHEBI:15825"/>
        <dbReference type="ChEBI" id="CHEBI:53157"/>
        <dbReference type="EC" id="1.13.11.59"/>
    </reaction>
    <physiologicalReaction direction="left-to-right" evidence="4">
        <dbReference type="Rhea" id="RHEA:31520"/>
    </physiologicalReaction>
</comment>
<comment type="cofactor">
    <cofactor evidence="1">
        <name>Fe(2+)</name>
        <dbReference type="ChEBI" id="CHEBI:29033"/>
    </cofactor>
    <text evidence="1">Binds 1 Fe(2+) ion per subunit.</text>
</comment>
<comment type="pathway">
    <text evidence="4">Carotenoid biosynthesis.</text>
</comment>
<comment type="subcellular location">
    <subcellularLocation>
        <location evidence="2">Cytoplasm</location>
        <location evidence="2">Cytosol</location>
    </subcellularLocation>
</comment>
<comment type="induction">
    <text evidence="4">The expression is subject to photoinduction and is transcriptionally co-regulated with the genes of the other carotenoid biosynthetic enzymes.</text>
</comment>
<comment type="similarity">
    <text evidence="6">Belongs to the carotenoid oxygenase family.</text>
</comment>
<proteinExistence type="evidence at protein level"/>
<gene>
    <name evidence="5" type="primary">carT</name>
    <name type="ORF">FFC1_03541</name>
</gene>
<protein>
    <recommendedName>
        <fullName evidence="5">Torulene dioxygenase</fullName>
        <ecNumber evidence="4">1.13.11.59</ecNumber>
    </recommendedName>
    <alternativeName>
        <fullName evidence="5">Carotenoid biosynthesis cluster protein T</fullName>
    </alternativeName>
</protein>
<feature type="chain" id="PRO_0000456842" description="Torulene dioxygenase">
    <location>
        <begin position="1"/>
        <end position="577"/>
    </location>
</feature>
<feature type="binding site" evidence="1">
    <location>
        <position position="239"/>
    </location>
    <ligand>
        <name>Fe(2+)</name>
        <dbReference type="ChEBI" id="CHEBI:29033"/>
        <note>catalytic</note>
    </ligand>
</feature>
<feature type="binding site" evidence="3">
    <location>
        <position position="291"/>
    </location>
    <ligand>
        <name>Fe(2+)</name>
        <dbReference type="ChEBI" id="CHEBI:29033"/>
        <note>catalytic</note>
    </ligand>
</feature>
<feature type="binding site" evidence="3">
    <location>
        <position position="361"/>
    </location>
    <ligand>
        <name>Fe(2+)</name>
        <dbReference type="ChEBI" id="CHEBI:29033"/>
        <note>catalytic</note>
    </ligand>
</feature>
<feature type="binding site" evidence="3">
    <location>
        <position position="570"/>
    </location>
    <ligand>
        <name>Fe(2+)</name>
        <dbReference type="ChEBI" id="CHEBI:29033"/>
        <note>catalytic</note>
    </ligand>
</feature>
<keyword id="KW-0125">Carotenoid biosynthesis</keyword>
<keyword id="KW-0963">Cytoplasm</keyword>
<keyword id="KW-0223">Dioxygenase</keyword>
<keyword id="KW-0408">Iron</keyword>
<keyword id="KW-0479">Metal-binding</keyword>
<keyword id="KW-0560">Oxidoreductase</keyword>
<name>CART_FUSFU</name>
<dbReference type="EC" id="1.13.11.59" evidence="4"/>
<dbReference type="EMBL" id="AM418467">
    <property type="protein sequence ID" value="CAL90970.1"/>
    <property type="molecule type" value="Genomic_DNA"/>
</dbReference>
<dbReference type="EMBL" id="FMJU01000002">
    <property type="protein sequence ID" value="SCN80404.1"/>
    <property type="molecule type" value="Genomic_DNA"/>
</dbReference>
<dbReference type="SMR" id="A1KQY3"/>
<dbReference type="KEGG" id="ag:CAL90970"/>
<dbReference type="BRENDA" id="1.13.11.59">
    <property type="organism ID" value="2425"/>
</dbReference>
<dbReference type="BRENDA" id="1.13.11.67">
    <property type="organism ID" value="2425"/>
</dbReference>
<dbReference type="GO" id="GO:0005829">
    <property type="term" value="C:cytosol"/>
    <property type="evidence" value="ECO:0007669"/>
    <property type="project" value="UniProtKB-SubCell"/>
</dbReference>
<dbReference type="GO" id="GO:0010436">
    <property type="term" value="F:carotenoid dioxygenase activity"/>
    <property type="evidence" value="ECO:0007669"/>
    <property type="project" value="TreeGrafter"/>
</dbReference>
<dbReference type="GO" id="GO:0046872">
    <property type="term" value="F:metal ion binding"/>
    <property type="evidence" value="ECO:0007669"/>
    <property type="project" value="UniProtKB-KW"/>
</dbReference>
<dbReference type="GO" id="GO:0016121">
    <property type="term" value="P:carotene catabolic process"/>
    <property type="evidence" value="ECO:0007669"/>
    <property type="project" value="TreeGrafter"/>
</dbReference>
<dbReference type="GO" id="GO:0016117">
    <property type="term" value="P:carotenoid biosynthetic process"/>
    <property type="evidence" value="ECO:0007669"/>
    <property type="project" value="UniProtKB-KW"/>
</dbReference>
<dbReference type="InterPro" id="IPR004294">
    <property type="entry name" value="Carotenoid_Oase"/>
</dbReference>
<dbReference type="PANTHER" id="PTHR10543">
    <property type="entry name" value="BETA-CAROTENE DIOXYGENASE"/>
    <property type="match status" value="1"/>
</dbReference>
<dbReference type="PANTHER" id="PTHR10543:SF24">
    <property type="entry name" value="CAROTENOID ISOMEROOXYGENASE"/>
    <property type="match status" value="1"/>
</dbReference>
<dbReference type="Pfam" id="PF03055">
    <property type="entry name" value="RPE65"/>
    <property type="match status" value="1"/>
</dbReference>
<organism>
    <name type="scientific">Fusarium fujikuroi</name>
    <name type="common">Bakanae and foot rot disease fungus</name>
    <name type="synonym">Gibberella fujikuroi</name>
    <dbReference type="NCBI Taxonomy" id="5127"/>
    <lineage>
        <taxon>Eukaryota</taxon>
        <taxon>Fungi</taxon>
        <taxon>Dikarya</taxon>
        <taxon>Ascomycota</taxon>
        <taxon>Pezizomycotina</taxon>
        <taxon>Sordariomycetes</taxon>
        <taxon>Hypocreomycetidae</taxon>
        <taxon>Hypocreales</taxon>
        <taxon>Nectriaceae</taxon>
        <taxon>Fusarium</taxon>
        <taxon>Fusarium fujikuroi species complex</taxon>
    </lineage>
</organism>
<accession>A1KQY3</accession>